<dbReference type="SMR" id="Q9PSM4"/>
<dbReference type="GO" id="GO:0005576">
    <property type="term" value="C:extracellular region"/>
    <property type="evidence" value="ECO:0000314"/>
    <property type="project" value="UniProtKB"/>
</dbReference>
<dbReference type="GO" id="GO:0032991">
    <property type="term" value="C:protein-containing complex"/>
    <property type="evidence" value="ECO:0000353"/>
    <property type="project" value="UniProtKB"/>
</dbReference>
<dbReference type="GO" id="GO:0030246">
    <property type="term" value="F:carbohydrate binding"/>
    <property type="evidence" value="ECO:0007669"/>
    <property type="project" value="UniProtKB-KW"/>
</dbReference>
<dbReference type="GO" id="GO:0046872">
    <property type="term" value="F:metal ion binding"/>
    <property type="evidence" value="ECO:0007669"/>
    <property type="project" value="UniProtKB-KW"/>
</dbReference>
<dbReference type="GO" id="GO:0090729">
    <property type="term" value="F:toxin activity"/>
    <property type="evidence" value="ECO:0000314"/>
    <property type="project" value="UniProtKB"/>
</dbReference>
<dbReference type="GO" id="GO:0007157">
    <property type="term" value="P:heterophilic cell-cell adhesion via plasma membrane cell adhesion molecules"/>
    <property type="evidence" value="ECO:0000314"/>
    <property type="project" value="UniProtKB"/>
</dbReference>
<dbReference type="CDD" id="cd03594">
    <property type="entry name" value="CLECT_REG-1_like"/>
    <property type="match status" value="1"/>
</dbReference>
<dbReference type="FunFam" id="3.10.100.10:FF:000015">
    <property type="entry name" value="C-type lectin Cal"/>
    <property type="match status" value="1"/>
</dbReference>
<dbReference type="Gene3D" id="3.10.100.10">
    <property type="entry name" value="Mannose-Binding Protein A, subunit A"/>
    <property type="match status" value="1"/>
</dbReference>
<dbReference type="InterPro" id="IPR001304">
    <property type="entry name" value="C-type_lectin-like"/>
</dbReference>
<dbReference type="InterPro" id="IPR016186">
    <property type="entry name" value="C-type_lectin-like/link_sf"/>
</dbReference>
<dbReference type="InterPro" id="IPR050111">
    <property type="entry name" value="C-type_lectin/snaclec_domain"/>
</dbReference>
<dbReference type="InterPro" id="IPR018378">
    <property type="entry name" value="C-type_lectin_CS"/>
</dbReference>
<dbReference type="InterPro" id="IPR016187">
    <property type="entry name" value="CTDL_fold"/>
</dbReference>
<dbReference type="PANTHER" id="PTHR22803">
    <property type="entry name" value="MANNOSE, PHOSPHOLIPASE, LECTIN RECEPTOR RELATED"/>
    <property type="match status" value="1"/>
</dbReference>
<dbReference type="Pfam" id="PF00059">
    <property type="entry name" value="Lectin_C"/>
    <property type="match status" value="1"/>
</dbReference>
<dbReference type="PRINTS" id="PR01504">
    <property type="entry name" value="PNCREATITSAP"/>
</dbReference>
<dbReference type="SMART" id="SM00034">
    <property type="entry name" value="CLECT"/>
    <property type="match status" value="1"/>
</dbReference>
<dbReference type="SUPFAM" id="SSF56436">
    <property type="entry name" value="C-type lectin-like"/>
    <property type="match status" value="1"/>
</dbReference>
<dbReference type="PROSITE" id="PS00615">
    <property type="entry name" value="C_TYPE_LECTIN_1"/>
    <property type="match status" value="1"/>
</dbReference>
<dbReference type="PROSITE" id="PS50041">
    <property type="entry name" value="C_TYPE_LECTIN_2"/>
    <property type="match status" value="1"/>
</dbReference>
<proteinExistence type="evidence at protein level"/>
<name>LECG_LACST</name>
<protein>
    <recommendedName>
        <fullName>C-type lectin LmsL</fullName>
        <shortName>CTL</shortName>
    </recommendedName>
    <alternativeName>
        <fullName>Galactose-specific lectin</fullName>
    </alternativeName>
    <alternativeName>
        <fullName>Mutina</fullName>
    </alternativeName>
</protein>
<evidence type="ECO:0000250" key="1"/>
<evidence type="ECO:0000250" key="2">
    <source>
        <dbReference type="UniProtKB" id="P21963"/>
    </source>
</evidence>
<evidence type="ECO:0000255" key="3">
    <source>
        <dbReference type="PROSITE-ProRule" id="PRU00040"/>
    </source>
</evidence>
<evidence type="ECO:0000269" key="4">
    <source>
    </source>
</evidence>
<evidence type="ECO:0000269" key="5">
    <source ref="2"/>
</evidence>
<evidence type="ECO:0000305" key="6"/>
<reference evidence="6" key="1">
    <citation type="journal article" date="1996" name="Toxicon">
        <title>Amino acid sequence of a lectin-like protein from Lachesis muta stenophyrs venom.</title>
        <authorList>
            <person name="Aragon-Ortiz F."/>
            <person name="Mentele R."/>
            <person name="Auerswald E.A."/>
        </authorList>
    </citation>
    <scope>PROTEIN SEQUENCE</scope>
    <source>
        <tissue>Venom</tissue>
    </source>
</reference>
<reference evidence="6" key="2">
    <citation type="journal article" date="1990" name="Toxicon">
        <title>Characterization and properties of a lectin-like protein from Lachesis muta snake venom.</title>
        <authorList>
            <person name="Aragon-Ortiz F."/>
            <person name="Brenes-Brenes J.R."/>
            <person name="Gubensek F."/>
        </authorList>
    </citation>
    <scope>PROTEIN SEQUENCE OF 1-40</scope>
    <scope>FUNCTION</scope>
    <scope>INDUCTION</scope>
    <source>
        <tissue>Venom</tissue>
    </source>
</reference>
<reference evidence="6" key="3">
    <citation type="journal article" date="1986" name="Rev. Biol. Trop.">
        <title>Purification and some properties of hemagglutinating protein mutina from bushmaster Lachesis muta snake venom.</title>
        <authorList>
            <person name="Gomez Leiva M.A."/>
            <person name="Aragon-Ortiz F."/>
        </authorList>
    </citation>
    <scope>FUNCTION</scope>
    <source>
        <tissue>Venom</tissue>
    </source>
</reference>
<sequence>NNCPQDWLPMNGLCYKIFDEQKAWEDAEMFCRKYKPGCHLASFHRYGESLEIAEYISDYHKGQAEVWIGLWDKKKDFSWEWTDRSCTDYLTWDKNQPDHYEGKEFCVELVSLTGYRLWNDQVCESKNAFLCQCKF</sequence>
<comment type="function">
    <text evidence="4 5">Galactose-binding protein which recognizes specific carbohydrate structures and agglutinates a variety of animal cells by binding to cell-surface glycoproteins and glycolipids. Is a calcium-dependent lectin. Shows high hemagglutinating activity, that is inhibited by lactose, galactose and inositol.</text>
</comment>
<comment type="subunit">
    <text evidence="2">Homodimer; disulfide-linked.</text>
</comment>
<comment type="subcellular location">
    <subcellularLocation>
        <location evidence="6">Secreted</location>
    </subcellularLocation>
</comment>
<comment type="tissue specificity">
    <text>Expressed by the venom gland.</text>
</comment>
<comment type="similarity">
    <text evidence="6">Belongs to the true venom lectin family.</text>
</comment>
<organism evidence="6">
    <name type="scientific">Lachesis stenophrys</name>
    <name type="common">Central American bushmaster</name>
    <dbReference type="NCBI Taxonomy" id="88085"/>
    <lineage>
        <taxon>Eukaryota</taxon>
        <taxon>Metazoa</taxon>
        <taxon>Chordata</taxon>
        <taxon>Craniata</taxon>
        <taxon>Vertebrata</taxon>
        <taxon>Euteleostomi</taxon>
        <taxon>Lepidosauria</taxon>
        <taxon>Squamata</taxon>
        <taxon>Bifurcata</taxon>
        <taxon>Unidentata</taxon>
        <taxon>Episquamata</taxon>
        <taxon>Toxicofera</taxon>
        <taxon>Serpentes</taxon>
        <taxon>Colubroidea</taxon>
        <taxon>Viperidae</taxon>
        <taxon>Crotalinae</taxon>
        <taxon>Lachesis</taxon>
    </lineage>
</organism>
<feature type="chain" id="PRO_0000046645" description="C-type lectin LmsL">
    <location>
        <begin position="1"/>
        <end position="135"/>
    </location>
</feature>
<feature type="domain" description="C-type lectin" evidence="3">
    <location>
        <begin position="10"/>
        <end position="132"/>
    </location>
</feature>
<feature type="short sequence motif" description="Galactose-binding">
    <location>
        <begin position="96"/>
        <end position="98"/>
    </location>
</feature>
<feature type="binding site" evidence="1">
    <location>
        <position position="96"/>
    </location>
    <ligand>
        <name>Ca(2+)</name>
        <dbReference type="ChEBI" id="CHEBI:29108"/>
    </ligand>
</feature>
<feature type="binding site" evidence="1">
    <location>
        <position position="98"/>
    </location>
    <ligand>
        <name>Ca(2+)</name>
        <dbReference type="ChEBI" id="CHEBI:29108"/>
    </ligand>
</feature>
<feature type="binding site" evidence="1">
    <location>
        <position position="104"/>
    </location>
    <ligand>
        <name>Ca(2+)</name>
        <dbReference type="ChEBI" id="CHEBI:29108"/>
    </ligand>
</feature>
<feature type="binding site" evidence="1">
    <location>
        <position position="119"/>
    </location>
    <ligand>
        <name>Ca(2+)</name>
        <dbReference type="ChEBI" id="CHEBI:29108"/>
    </ligand>
</feature>
<feature type="binding site" evidence="1">
    <location>
        <position position="120"/>
    </location>
    <ligand>
        <name>Ca(2+)</name>
        <dbReference type="ChEBI" id="CHEBI:29108"/>
    </ligand>
</feature>
<feature type="disulfide bond" evidence="3">
    <location>
        <begin position="3"/>
        <end position="14"/>
    </location>
</feature>
<feature type="disulfide bond" evidence="3">
    <location>
        <begin position="31"/>
        <end position="131"/>
    </location>
</feature>
<feature type="disulfide bond" evidence="3">
    <location>
        <begin position="38"/>
        <end position="133"/>
    </location>
</feature>
<feature type="disulfide bond" description="Interchain" evidence="3">
    <location>
        <position position="86"/>
    </location>
</feature>
<feature type="disulfide bond" evidence="3">
    <location>
        <begin position="106"/>
        <end position="123"/>
    </location>
</feature>
<accession>Q9PSM4</accession>
<keyword id="KW-0106">Calcium</keyword>
<keyword id="KW-0903">Direct protein sequencing</keyword>
<keyword id="KW-1015">Disulfide bond</keyword>
<keyword id="KW-0348">Hemagglutinin</keyword>
<keyword id="KW-0430">Lectin</keyword>
<keyword id="KW-0479">Metal-binding</keyword>
<keyword id="KW-0964">Secreted</keyword>